<evidence type="ECO:0000255" key="1">
    <source>
        <dbReference type="HAMAP-Rule" id="MF_00165"/>
    </source>
</evidence>
<name>KTHY_SALCH</name>
<organism>
    <name type="scientific">Salmonella choleraesuis (strain SC-B67)</name>
    <dbReference type="NCBI Taxonomy" id="321314"/>
    <lineage>
        <taxon>Bacteria</taxon>
        <taxon>Pseudomonadati</taxon>
        <taxon>Pseudomonadota</taxon>
        <taxon>Gammaproteobacteria</taxon>
        <taxon>Enterobacterales</taxon>
        <taxon>Enterobacteriaceae</taxon>
        <taxon>Salmonella</taxon>
    </lineage>
</organism>
<sequence length="213" mass="23738">MGSNYIVIEGLEGAGKTTARDVVVETLEQLGIRNMIFTREPGGTQLAEKLRSLVLDIRSVGDEVITDKAEVLMFYAARVQLVETVIKPALAQGIWVIGDRHDLSTQAYQGGGRGIDQTMLATLRDAVLGDFRPDLTLYLDVTPEVGLKRARARGDLDRIEQESFDFFNRTRARYLELAAQDSRIRTIDATQPLDAVMRDIRATVTKWVQEQAA</sequence>
<proteinExistence type="inferred from homology"/>
<comment type="function">
    <text evidence="1">Phosphorylation of dTMP to form dTDP in both de novo and salvage pathways of dTTP synthesis.</text>
</comment>
<comment type="catalytic activity">
    <reaction evidence="1">
        <text>dTMP + ATP = dTDP + ADP</text>
        <dbReference type="Rhea" id="RHEA:13517"/>
        <dbReference type="ChEBI" id="CHEBI:30616"/>
        <dbReference type="ChEBI" id="CHEBI:58369"/>
        <dbReference type="ChEBI" id="CHEBI:63528"/>
        <dbReference type="ChEBI" id="CHEBI:456216"/>
        <dbReference type="EC" id="2.7.4.9"/>
    </reaction>
</comment>
<comment type="similarity">
    <text evidence="1">Belongs to the thymidylate kinase family.</text>
</comment>
<feature type="chain" id="PRO_1000023274" description="Thymidylate kinase">
    <location>
        <begin position="1"/>
        <end position="213"/>
    </location>
</feature>
<feature type="binding site" evidence="1">
    <location>
        <begin position="10"/>
        <end position="17"/>
    </location>
    <ligand>
        <name>ATP</name>
        <dbReference type="ChEBI" id="CHEBI:30616"/>
    </ligand>
</feature>
<keyword id="KW-0067">ATP-binding</keyword>
<keyword id="KW-0418">Kinase</keyword>
<keyword id="KW-0545">Nucleotide biosynthesis</keyword>
<keyword id="KW-0547">Nucleotide-binding</keyword>
<keyword id="KW-0808">Transferase</keyword>
<gene>
    <name evidence="1" type="primary">tmk</name>
    <name type="ordered locus">SCH_1150</name>
</gene>
<accession>Q57QF5</accession>
<dbReference type="EC" id="2.7.4.9" evidence="1"/>
<dbReference type="EMBL" id="AE017220">
    <property type="protein sequence ID" value="AAX65056.1"/>
    <property type="molecule type" value="Genomic_DNA"/>
</dbReference>
<dbReference type="RefSeq" id="WP_000535396.1">
    <property type="nucleotide sequence ID" value="NC_006905.1"/>
</dbReference>
<dbReference type="SMR" id="Q57QF5"/>
<dbReference type="KEGG" id="sec:SCH_1150"/>
<dbReference type="HOGENOM" id="CLU_049131_0_1_6"/>
<dbReference type="Proteomes" id="UP000000538">
    <property type="component" value="Chromosome"/>
</dbReference>
<dbReference type="GO" id="GO:0005829">
    <property type="term" value="C:cytosol"/>
    <property type="evidence" value="ECO:0007669"/>
    <property type="project" value="TreeGrafter"/>
</dbReference>
<dbReference type="GO" id="GO:0005524">
    <property type="term" value="F:ATP binding"/>
    <property type="evidence" value="ECO:0007669"/>
    <property type="project" value="UniProtKB-UniRule"/>
</dbReference>
<dbReference type="GO" id="GO:0004798">
    <property type="term" value="F:dTMP kinase activity"/>
    <property type="evidence" value="ECO:0007669"/>
    <property type="project" value="UniProtKB-UniRule"/>
</dbReference>
<dbReference type="GO" id="GO:0006233">
    <property type="term" value="P:dTDP biosynthetic process"/>
    <property type="evidence" value="ECO:0007669"/>
    <property type="project" value="InterPro"/>
</dbReference>
<dbReference type="GO" id="GO:0006235">
    <property type="term" value="P:dTTP biosynthetic process"/>
    <property type="evidence" value="ECO:0007669"/>
    <property type="project" value="UniProtKB-UniRule"/>
</dbReference>
<dbReference type="GO" id="GO:0006227">
    <property type="term" value="P:dUDP biosynthetic process"/>
    <property type="evidence" value="ECO:0007669"/>
    <property type="project" value="TreeGrafter"/>
</dbReference>
<dbReference type="CDD" id="cd01672">
    <property type="entry name" value="TMPK"/>
    <property type="match status" value="1"/>
</dbReference>
<dbReference type="FunFam" id="3.40.50.300:FF:000321">
    <property type="entry name" value="Thymidylate kinase"/>
    <property type="match status" value="1"/>
</dbReference>
<dbReference type="Gene3D" id="3.40.50.300">
    <property type="entry name" value="P-loop containing nucleotide triphosphate hydrolases"/>
    <property type="match status" value="1"/>
</dbReference>
<dbReference type="HAMAP" id="MF_00165">
    <property type="entry name" value="Thymidylate_kinase"/>
    <property type="match status" value="1"/>
</dbReference>
<dbReference type="InterPro" id="IPR027417">
    <property type="entry name" value="P-loop_NTPase"/>
</dbReference>
<dbReference type="InterPro" id="IPR039430">
    <property type="entry name" value="Thymidylate_kin-like_dom"/>
</dbReference>
<dbReference type="InterPro" id="IPR018095">
    <property type="entry name" value="Thymidylate_kin_CS"/>
</dbReference>
<dbReference type="InterPro" id="IPR018094">
    <property type="entry name" value="Thymidylate_kinase"/>
</dbReference>
<dbReference type="NCBIfam" id="TIGR00041">
    <property type="entry name" value="DTMP_kinase"/>
    <property type="match status" value="1"/>
</dbReference>
<dbReference type="PANTHER" id="PTHR10344">
    <property type="entry name" value="THYMIDYLATE KINASE"/>
    <property type="match status" value="1"/>
</dbReference>
<dbReference type="PANTHER" id="PTHR10344:SF4">
    <property type="entry name" value="UMP-CMP KINASE 2, MITOCHONDRIAL"/>
    <property type="match status" value="1"/>
</dbReference>
<dbReference type="Pfam" id="PF02223">
    <property type="entry name" value="Thymidylate_kin"/>
    <property type="match status" value="1"/>
</dbReference>
<dbReference type="SUPFAM" id="SSF52540">
    <property type="entry name" value="P-loop containing nucleoside triphosphate hydrolases"/>
    <property type="match status" value="1"/>
</dbReference>
<dbReference type="PROSITE" id="PS01331">
    <property type="entry name" value="THYMIDYLATE_KINASE"/>
    <property type="match status" value="1"/>
</dbReference>
<reference key="1">
    <citation type="journal article" date="2005" name="Nucleic Acids Res.">
        <title>The genome sequence of Salmonella enterica serovar Choleraesuis, a highly invasive and resistant zoonotic pathogen.</title>
        <authorList>
            <person name="Chiu C.-H."/>
            <person name="Tang P."/>
            <person name="Chu C."/>
            <person name="Hu S."/>
            <person name="Bao Q."/>
            <person name="Yu J."/>
            <person name="Chou Y.-Y."/>
            <person name="Wang H.-S."/>
            <person name="Lee Y.-S."/>
        </authorList>
    </citation>
    <scope>NUCLEOTIDE SEQUENCE [LARGE SCALE GENOMIC DNA]</scope>
    <source>
        <strain>SC-B67</strain>
    </source>
</reference>
<protein>
    <recommendedName>
        <fullName evidence="1">Thymidylate kinase</fullName>
        <ecNumber evidence="1">2.7.4.9</ecNumber>
    </recommendedName>
    <alternativeName>
        <fullName evidence="1">dTMP kinase</fullName>
    </alternativeName>
</protein>